<accession>Q09438</accession>
<dbReference type="EC" id="2.4.2.28" evidence="1"/>
<dbReference type="EMBL" id="FO080130">
    <property type="protein sequence ID" value="CCD61451.1"/>
    <property type="molecule type" value="Genomic_DNA"/>
</dbReference>
<dbReference type="PIR" id="T29047">
    <property type="entry name" value="T29047"/>
</dbReference>
<dbReference type="RefSeq" id="NP_001367321.1">
    <property type="nucleotide sequence ID" value="NM_001381506.3"/>
</dbReference>
<dbReference type="RefSeq" id="NP_495629.2">
    <property type="nucleotide sequence ID" value="NM_063228.6"/>
</dbReference>
<dbReference type="SMR" id="Q09438"/>
<dbReference type="BioGRID" id="39585">
    <property type="interactions" value="7"/>
</dbReference>
<dbReference type="FunCoup" id="Q09438">
    <property type="interactions" value="1786"/>
</dbReference>
<dbReference type="STRING" id="6239.B0228.7.3"/>
<dbReference type="PaxDb" id="6239-B0228.7.1"/>
<dbReference type="PeptideAtlas" id="Q09438"/>
<dbReference type="EnsemblMetazoa" id="B0228.7.1">
    <property type="protein sequence ID" value="B0228.7.1"/>
    <property type="gene ID" value="WBGene00015064"/>
</dbReference>
<dbReference type="EnsemblMetazoa" id="B0228.7.2">
    <property type="protein sequence ID" value="B0228.7.2"/>
    <property type="gene ID" value="WBGene00015064"/>
</dbReference>
<dbReference type="GeneID" id="174252"/>
<dbReference type="UCSC" id="B0228.7.1">
    <property type="organism name" value="c. elegans"/>
</dbReference>
<dbReference type="AGR" id="WB:WBGene00015064"/>
<dbReference type="WormBase" id="B0228.7">
    <property type="protein sequence ID" value="CE34630"/>
    <property type="gene ID" value="WBGene00015064"/>
</dbReference>
<dbReference type="eggNOG" id="KOG3985">
    <property type="taxonomic scope" value="Eukaryota"/>
</dbReference>
<dbReference type="GeneTree" id="ENSGT00950000182991"/>
<dbReference type="HOGENOM" id="CLU_054456_0_0_1"/>
<dbReference type="InParanoid" id="Q09438"/>
<dbReference type="OMA" id="ADPFCPE"/>
<dbReference type="OrthoDB" id="431409at2759"/>
<dbReference type="PhylomeDB" id="Q09438"/>
<dbReference type="Reactome" id="R-CEL-1237112">
    <property type="pathway name" value="Methionine salvage pathway"/>
</dbReference>
<dbReference type="UniPathway" id="UPA00904">
    <property type="reaction ID" value="UER00873"/>
</dbReference>
<dbReference type="PRO" id="PR:Q09438"/>
<dbReference type="Proteomes" id="UP000001940">
    <property type="component" value="Chromosome II"/>
</dbReference>
<dbReference type="Bgee" id="WBGene00015064">
    <property type="expression patterns" value="Expressed in larva and 4 other cell types or tissues"/>
</dbReference>
<dbReference type="GO" id="GO:0005829">
    <property type="term" value="C:cytosol"/>
    <property type="evidence" value="ECO:0000318"/>
    <property type="project" value="GO_Central"/>
</dbReference>
<dbReference type="GO" id="GO:0005634">
    <property type="term" value="C:nucleus"/>
    <property type="evidence" value="ECO:0007669"/>
    <property type="project" value="UniProtKB-SubCell"/>
</dbReference>
<dbReference type="GO" id="GO:0017061">
    <property type="term" value="F:S-methyl-5-thioadenosine phosphorylase activity"/>
    <property type="evidence" value="ECO:0000318"/>
    <property type="project" value="GO_Central"/>
</dbReference>
<dbReference type="GO" id="GO:0019509">
    <property type="term" value="P:L-methionine salvage from methylthioadenosine"/>
    <property type="evidence" value="ECO:0000318"/>
    <property type="project" value="GO_Central"/>
</dbReference>
<dbReference type="GO" id="GO:0006166">
    <property type="term" value="P:purine ribonucleoside salvage"/>
    <property type="evidence" value="ECO:0007669"/>
    <property type="project" value="UniProtKB-KW"/>
</dbReference>
<dbReference type="CDD" id="cd09010">
    <property type="entry name" value="MTAP_SsMTAPII_like_MTIP"/>
    <property type="match status" value="1"/>
</dbReference>
<dbReference type="FunFam" id="3.40.50.1580:FF:000020">
    <property type="entry name" value="S-methyl-5'-thioadenosine phosphorylase"/>
    <property type="match status" value="1"/>
</dbReference>
<dbReference type="Gene3D" id="3.40.50.1580">
    <property type="entry name" value="Nucleoside phosphorylase domain"/>
    <property type="match status" value="1"/>
</dbReference>
<dbReference type="HAMAP" id="MF_01963">
    <property type="entry name" value="MTAP"/>
    <property type="match status" value="1"/>
</dbReference>
<dbReference type="InterPro" id="IPR010044">
    <property type="entry name" value="MTAP"/>
</dbReference>
<dbReference type="InterPro" id="IPR000845">
    <property type="entry name" value="Nucleoside_phosphorylase_d"/>
</dbReference>
<dbReference type="InterPro" id="IPR035994">
    <property type="entry name" value="Nucleoside_phosphorylase_sf"/>
</dbReference>
<dbReference type="InterPro" id="IPR018099">
    <property type="entry name" value="Purine_phosphorylase-2_CS"/>
</dbReference>
<dbReference type="NCBIfam" id="TIGR01694">
    <property type="entry name" value="MTAP"/>
    <property type="match status" value="1"/>
</dbReference>
<dbReference type="PANTHER" id="PTHR42679">
    <property type="entry name" value="S-METHYL-5'-THIOADENOSINE PHOSPHORYLASE"/>
    <property type="match status" value="1"/>
</dbReference>
<dbReference type="PANTHER" id="PTHR42679:SF2">
    <property type="entry name" value="S-METHYL-5'-THIOADENOSINE PHOSPHORYLASE"/>
    <property type="match status" value="1"/>
</dbReference>
<dbReference type="Pfam" id="PF01048">
    <property type="entry name" value="PNP_UDP_1"/>
    <property type="match status" value="1"/>
</dbReference>
<dbReference type="SUPFAM" id="SSF53167">
    <property type="entry name" value="Purine and uridine phosphorylases"/>
    <property type="match status" value="1"/>
</dbReference>
<dbReference type="PROSITE" id="PS01240">
    <property type="entry name" value="PNP_MTAP_2"/>
    <property type="match status" value="1"/>
</dbReference>
<name>MTAP_CAEEL</name>
<proteinExistence type="inferred from homology"/>
<gene>
    <name type="ORF">B0228.7</name>
</gene>
<feature type="chain" id="PRO_0000184547" description="S-methyl-5'-thioadenosine phosphorylase">
    <location>
        <begin position="1"/>
        <end position="288"/>
    </location>
</feature>
<feature type="binding site" evidence="1">
    <location>
        <position position="10"/>
    </location>
    <ligand>
        <name>phosphate</name>
        <dbReference type="ChEBI" id="CHEBI:43474"/>
    </ligand>
</feature>
<feature type="binding site" evidence="1">
    <location>
        <begin position="52"/>
        <end position="53"/>
    </location>
    <ligand>
        <name>phosphate</name>
        <dbReference type="ChEBI" id="CHEBI:43474"/>
    </ligand>
</feature>
<feature type="binding site" evidence="1">
    <location>
        <begin position="85"/>
        <end position="86"/>
    </location>
    <ligand>
        <name>phosphate</name>
        <dbReference type="ChEBI" id="CHEBI:43474"/>
    </ligand>
</feature>
<feature type="binding site" evidence="1">
    <location>
        <position position="188"/>
    </location>
    <ligand>
        <name>substrate</name>
    </ligand>
</feature>
<feature type="binding site" evidence="1">
    <location>
        <position position="189"/>
    </location>
    <ligand>
        <name>phosphate</name>
        <dbReference type="ChEBI" id="CHEBI:43474"/>
    </ligand>
</feature>
<feature type="binding site" evidence="1">
    <location>
        <begin position="212"/>
        <end position="214"/>
    </location>
    <ligand>
        <name>substrate</name>
    </ligand>
</feature>
<feature type="site" description="Important for substrate specificity" evidence="1">
    <location>
        <position position="170"/>
    </location>
</feature>
<feature type="site" description="Important for substrate specificity" evidence="1">
    <location>
        <position position="224"/>
    </location>
</feature>
<sequence>MVKVGIIGGSGLEDPNILLDPVTVAVDTPYGKPSDDVVEGTINGVECVLLARHGRKHDIMPGNVNFRANLWALYSRGVDVIIASTACGSLQENVEPGHLLFPDSVFDRTTGRQSTFFDGSYDQAPGVCHIQAHPTYNEKLRQVLISTAERCQLVHHRTGFGVCIEGPRFSTKAESMVFKSWGASLVNMTMMPECILAKELGIPYATTALVTDYDCWKEEDHVTASSVMKVFAANVEKAKTLFVEAVGEIGKIDWSAEILKLKTEARESVMISPDVVIPFLTTDNQKKF</sequence>
<organism>
    <name type="scientific">Caenorhabditis elegans</name>
    <dbReference type="NCBI Taxonomy" id="6239"/>
    <lineage>
        <taxon>Eukaryota</taxon>
        <taxon>Metazoa</taxon>
        <taxon>Ecdysozoa</taxon>
        <taxon>Nematoda</taxon>
        <taxon>Chromadorea</taxon>
        <taxon>Rhabditida</taxon>
        <taxon>Rhabditina</taxon>
        <taxon>Rhabditomorpha</taxon>
        <taxon>Rhabditoidea</taxon>
        <taxon>Rhabditidae</taxon>
        <taxon>Peloderinae</taxon>
        <taxon>Caenorhabditis</taxon>
    </lineage>
</organism>
<comment type="function">
    <text evidence="1">Catalyzes the reversible phosphorylation of S-methyl-5'-thioadenosine (MTA) to adenine and 5-methylthioribose-1-phosphate. Involved in the breakdown of MTA, a major by-product of polyamine biosynthesis. Responsible for the first step in the methionine salvage pathway after MTA has been generated from S-adenosylmethionine. Has broad substrate specificity with 6-aminopurine nucleosides as preferred substrates.</text>
</comment>
<comment type="catalytic activity">
    <reaction evidence="1">
        <text>S-methyl-5'-thioadenosine + phosphate = 5-(methylsulfanyl)-alpha-D-ribose 1-phosphate + adenine</text>
        <dbReference type="Rhea" id="RHEA:11852"/>
        <dbReference type="ChEBI" id="CHEBI:16708"/>
        <dbReference type="ChEBI" id="CHEBI:17509"/>
        <dbReference type="ChEBI" id="CHEBI:43474"/>
        <dbReference type="ChEBI" id="CHEBI:58533"/>
        <dbReference type="EC" id="2.4.2.28"/>
    </reaction>
</comment>
<comment type="pathway">
    <text evidence="1">Amino-acid biosynthesis; L-methionine biosynthesis via salvage pathway; S-methyl-5-thio-alpha-D-ribose 1-phosphate from S-methyl-5'-thioadenosine (phosphorylase route): step 1/1.</text>
</comment>
<comment type="subunit">
    <text evidence="1">Homotrimer.</text>
</comment>
<comment type="subcellular location">
    <subcellularLocation>
        <location evidence="1">Cytoplasm</location>
    </subcellularLocation>
    <subcellularLocation>
        <location evidence="1">Nucleus</location>
    </subcellularLocation>
</comment>
<comment type="similarity">
    <text evidence="1">Belongs to the PNP/MTAP phosphorylase family. MTAP subfamily.</text>
</comment>
<evidence type="ECO:0000255" key="1">
    <source>
        <dbReference type="HAMAP-Rule" id="MF_03155"/>
    </source>
</evidence>
<reference key="1">
    <citation type="journal article" date="1998" name="Science">
        <title>Genome sequence of the nematode C. elegans: a platform for investigating biology.</title>
        <authorList>
            <consortium name="The C. elegans sequencing consortium"/>
        </authorList>
    </citation>
    <scope>NUCLEOTIDE SEQUENCE [LARGE SCALE GENOMIC DNA]</scope>
    <source>
        <strain>Bristol N2</strain>
    </source>
</reference>
<protein>
    <recommendedName>
        <fullName evidence="1">S-methyl-5'-thioadenosine phosphorylase</fullName>
        <ecNumber evidence="1">2.4.2.28</ecNumber>
    </recommendedName>
    <alternativeName>
        <fullName evidence="1">5'-methylthioadenosine phosphorylase</fullName>
        <shortName evidence="1">MTA phosphorylase</shortName>
        <shortName evidence="1">MTAP</shortName>
        <shortName evidence="1">MTAPase</shortName>
    </alternativeName>
</protein>
<keyword id="KW-0963">Cytoplasm</keyword>
<keyword id="KW-0328">Glycosyltransferase</keyword>
<keyword id="KW-0539">Nucleus</keyword>
<keyword id="KW-0660">Purine salvage</keyword>
<keyword id="KW-1185">Reference proteome</keyword>
<keyword id="KW-0808">Transferase</keyword>